<dbReference type="EC" id="2.7.1.237" evidence="1"/>
<dbReference type="EMBL" id="CP001014">
    <property type="protein sequence ID" value="ACB40456.1"/>
    <property type="molecule type" value="Genomic_DNA"/>
</dbReference>
<dbReference type="RefSeq" id="WP_012350875.1">
    <property type="nucleotide sequence ID" value="NC_010525.1"/>
</dbReference>
<dbReference type="SMR" id="B1Y9M7"/>
<dbReference type="STRING" id="444157.Tneu_1532"/>
<dbReference type="GeneID" id="6165254"/>
<dbReference type="KEGG" id="tne:Tneu_1532"/>
<dbReference type="eggNOG" id="arCOG04076">
    <property type="taxonomic scope" value="Archaea"/>
</dbReference>
<dbReference type="HOGENOM" id="CLU_120795_1_0_2"/>
<dbReference type="OrthoDB" id="15447at2157"/>
<dbReference type="UniPathway" id="UPA00241"/>
<dbReference type="Proteomes" id="UP000001694">
    <property type="component" value="Chromosome"/>
</dbReference>
<dbReference type="GO" id="GO:0005525">
    <property type="term" value="F:GTP binding"/>
    <property type="evidence" value="ECO:0007669"/>
    <property type="project" value="UniProtKB-UniRule"/>
</dbReference>
<dbReference type="GO" id="GO:0016301">
    <property type="term" value="F:kinase activity"/>
    <property type="evidence" value="ECO:0007669"/>
    <property type="project" value="UniProtKB-UniRule"/>
</dbReference>
<dbReference type="GO" id="GO:0015937">
    <property type="term" value="P:coenzyme A biosynthetic process"/>
    <property type="evidence" value="ECO:0007669"/>
    <property type="project" value="UniProtKB-UniRule"/>
</dbReference>
<dbReference type="HAMAP" id="MF_00590">
    <property type="entry name" value="Dephospho_CoA_kinase_GTP_dep"/>
    <property type="match status" value="1"/>
</dbReference>
<dbReference type="InterPro" id="IPR007164">
    <property type="entry name" value="GTP-dep_dephospho-CoA_kin"/>
</dbReference>
<dbReference type="PANTHER" id="PTHR40732:SF1">
    <property type="entry name" value="GTP-DEPENDENT DEPHOSPHO-COA KINASE"/>
    <property type="match status" value="1"/>
</dbReference>
<dbReference type="PANTHER" id="PTHR40732">
    <property type="entry name" value="UPF0218 PROTEIN TK1697"/>
    <property type="match status" value="1"/>
</dbReference>
<dbReference type="Pfam" id="PF04019">
    <property type="entry name" value="DUF359"/>
    <property type="match status" value="1"/>
</dbReference>
<proteinExistence type="inferred from homology"/>
<accession>B1Y9M7</accession>
<sequence length="168" mass="19096">MRCLRIRERRDLFAFPYPIAVWREPPRSLEVVSDLALSYGVEHIYTVGDVVTKNFLDYGVTPTSAAVDEKTRRGLPVEQHRKFQRVIKVVNPPGYITEEAWAAVEEAVGGGVLIKVEGEEDMLALAFIKMAPPRSLVVYGHYKGALIAVMVDWYRDAIDRLLQYLEKC</sequence>
<protein>
    <recommendedName>
        <fullName evidence="1">GTP-dependent dephospho-CoA kinase</fullName>
        <ecNumber evidence="1">2.7.1.237</ecNumber>
    </recommendedName>
    <alternativeName>
        <fullName evidence="1">Dephospho-coenzyme A kinase</fullName>
        <shortName evidence="1">DPCK</shortName>
    </alternativeName>
</protein>
<evidence type="ECO:0000255" key="1">
    <source>
        <dbReference type="HAMAP-Rule" id="MF_00590"/>
    </source>
</evidence>
<feature type="chain" id="PRO_1000129794" description="GTP-dependent dephospho-CoA kinase">
    <location>
        <begin position="1"/>
        <end position="168"/>
    </location>
</feature>
<feature type="binding site" evidence="1">
    <location>
        <position position="49"/>
    </location>
    <ligand>
        <name>GTP</name>
        <dbReference type="ChEBI" id="CHEBI:37565"/>
    </ligand>
</feature>
<feature type="binding site" evidence="1">
    <location>
        <position position="50"/>
    </location>
    <ligand>
        <name>GTP</name>
        <dbReference type="ChEBI" id="CHEBI:37565"/>
    </ligand>
</feature>
<feature type="binding site" evidence="1">
    <location>
        <position position="51"/>
    </location>
    <ligand>
        <name>GTP</name>
        <dbReference type="ChEBI" id="CHEBI:37565"/>
    </ligand>
</feature>
<feature type="binding site" evidence="1">
    <location>
        <position position="68"/>
    </location>
    <ligand>
        <name>GTP</name>
        <dbReference type="ChEBI" id="CHEBI:37565"/>
    </ligand>
</feature>
<feature type="binding site" evidence="1">
    <location>
        <position position="70"/>
    </location>
    <ligand>
        <name>GTP</name>
        <dbReference type="ChEBI" id="CHEBI:37565"/>
    </ligand>
</feature>
<feature type="binding site" evidence="1">
    <location>
        <position position="120"/>
    </location>
    <ligand>
        <name>GTP</name>
        <dbReference type="ChEBI" id="CHEBI:37565"/>
    </ligand>
</feature>
<reference key="1">
    <citation type="submission" date="2008-03" db="EMBL/GenBank/DDBJ databases">
        <title>Complete sequence of Thermoproteus neutrophilus V24Sta.</title>
        <authorList>
            <consortium name="US DOE Joint Genome Institute"/>
            <person name="Copeland A."/>
            <person name="Lucas S."/>
            <person name="Lapidus A."/>
            <person name="Glavina del Rio T."/>
            <person name="Dalin E."/>
            <person name="Tice H."/>
            <person name="Bruce D."/>
            <person name="Goodwin L."/>
            <person name="Pitluck S."/>
            <person name="Sims D."/>
            <person name="Brettin T."/>
            <person name="Detter J.C."/>
            <person name="Han C."/>
            <person name="Kuske C.R."/>
            <person name="Schmutz J."/>
            <person name="Larimer F."/>
            <person name="Land M."/>
            <person name="Hauser L."/>
            <person name="Kyrpides N."/>
            <person name="Mikhailova N."/>
            <person name="Biddle J.F."/>
            <person name="Zhang Z."/>
            <person name="Fitz-Gibbon S.T."/>
            <person name="Lowe T.M."/>
            <person name="Saltikov C."/>
            <person name="House C.H."/>
            <person name="Richardson P."/>
        </authorList>
    </citation>
    <scope>NUCLEOTIDE SEQUENCE [LARGE SCALE GENOMIC DNA]</scope>
    <source>
        <strain>DSM 2338 / JCM 9278 / NBRC 100436 / V24Sta</strain>
    </source>
</reference>
<organism>
    <name type="scientific">Pyrobaculum neutrophilum (strain DSM 2338 / JCM 9278 / NBRC 100436 / V24Sta)</name>
    <name type="common">Thermoproteus neutrophilus</name>
    <dbReference type="NCBI Taxonomy" id="444157"/>
    <lineage>
        <taxon>Archaea</taxon>
        <taxon>Thermoproteota</taxon>
        <taxon>Thermoprotei</taxon>
        <taxon>Thermoproteales</taxon>
        <taxon>Thermoproteaceae</taxon>
        <taxon>Pyrobaculum</taxon>
    </lineage>
</organism>
<comment type="function">
    <text evidence="1">Catalyzes the GTP-dependent phosphorylation of the 3'-hydroxyl group of dephosphocoenzyme A to form coenzyme A (CoA).</text>
</comment>
<comment type="catalytic activity">
    <reaction evidence="1">
        <text>3'-dephospho-CoA + GTP = GDP + CoA + H(+)</text>
        <dbReference type="Rhea" id="RHEA:61156"/>
        <dbReference type="ChEBI" id="CHEBI:15378"/>
        <dbReference type="ChEBI" id="CHEBI:37565"/>
        <dbReference type="ChEBI" id="CHEBI:57287"/>
        <dbReference type="ChEBI" id="CHEBI:57328"/>
        <dbReference type="ChEBI" id="CHEBI:58189"/>
        <dbReference type="EC" id="2.7.1.237"/>
    </reaction>
</comment>
<comment type="pathway">
    <text evidence="1">Cofactor biosynthesis; coenzyme A biosynthesis.</text>
</comment>
<comment type="similarity">
    <text evidence="1">Belongs to the GTP-dependent DPCK family.</text>
</comment>
<gene>
    <name type="ordered locus">Tneu_1532</name>
</gene>
<name>DPCKG_PYRNV</name>
<keyword id="KW-0173">Coenzyme A biosynthesis</keyword>
<keyword id="KW-0342">GTP-binding</keyword>
<keyword id="KW-0418">Kinase</keyword>
<keyword id="KW-0547">Nucleotide-binding</keyword>
<keyword id="KW-0808">Transferase</keyword>